<feature type="chain" id="PRO_1000078786" description="Potassium-transporting ATPase potassium-binding subunit">
    <location>
        <begin position="1"/>
        <end position="596"/>
    </location>
</feature>
<feature type="transmembrane region" description="Helical" evidence="1">
    <location>
        <begin position="6"/>
        <end position="26"/>
    </location>
</feature>
<feature type="transmembrane region" description="Helical" evidence="1">
    <location>
        <begin position="67"/>
        <end position="87"/>
    </location>
</feature>
<feature type="transmembrane region" description="Helical" evidence="1">
    <location>
        <begin position="136"/>
        <end position="156"/>
    </location>
</feature>
<feature type="transmembrane region" description="Helical" evidence="1">
    <location>
        <begin position="177"/>
        <end position="197"/>
    </location>
</feature>
<feature type="transmembrane region" description="Helical" evidence="1">
    <location>
        <begin position="283"/>
        <end position="303"/>
    </location>
</feature>
<feature type="transmembrane region" description="Helical" evidence="1">
    <location>
        <begin position="314"/>
        <end position="334"/>
    </location>
</feature>
<feature type="transmembrane region" description="Helical" evidence="1">
    <location>
        <begin position="413"/>
        <end position="433"/>
    </location>
</feature>
<feature type="transmembrane region" description="Helical" evidence="1">
    <location>
        <begin position="450"/>
        <end position="470"/>
    </location>
</feature>
<feature type="transmembrane region" description="Helical" evidence="1">
    <location>
        <begin position="518"/>
        <end position="538"/>
    </location>
</feature>
<feature type="transmembrane region" description="Helical" evidence="1">
    <location>
        <begin position="560"/>
        <end position="580"/>
    </location>
</feature>
<gene>
    <name evidence="1" type="primary">kdpA</name>
    <name type="ordered locus">Pnuc_1670</name>
</gene>
<protein>
    <recommendedName>
        <fullName evidence="1">Potassium-transporting ATPase potassium-binding subunit</fullName>
    </recommendedName>
    <alternativeName>
        <fullName evidence="1">ATP phosphohydrolase [potassium-transporting] A chain</fullName>
    </alternativeName>
    <alternativeName>
        <fullName evidence="1">Potassium-binding and translocating subunit A</fullName>
    </alternativeName>
    <alternativeName>
        <fullName evidence="1">Potassium-translocating ATPase A chain</fullName>
    </alternativeName>
</protein>
<keyword id="KW-0997">Cell inner membrane</keyword>
<keyword id="KW-1003">Cell membrane</keyword>
<keyword id="KW-0406">Ion transport</keyword>
<keyword id="KW-0472">Membrane</keyword>
<keyword id="KW-0630">Potassium</keyword>
<keyword id="KW-0633">Potassium transport</keyword>
<keyword id="KW-1185">Reference proteome</keyword>
<keyword id="KW-0812">Transmembrane</keyword>
<keyword id="KW-1133">Transmembrane helix</keyword>
<keyword id="KW-0813">Transport</keyword>
<evidence type="ECO:0000255" key="1">
    <source>
        <dbReference type="HAMAP-Rule" id="MF_00275"/>
    </source>
</evidence>
<organism>
    <name type="scientific">Polynucleobacter asymbioticus (strain DSM 18221 / CIP 109841 / QLW-P1DMWA-1)</name>
    <name type="common">Polynucleobacter necessarius subsp. asymbioticus</name>
    <dbReference type="NCBI Taxonomy" id="312153"/>
    <lineage>
        <taxon>Bacteria</taxon>
        <taxon>Pseudomonadati</taxon>
        <taxon>Pseudomonadota</taxon>
        <taxon>Betaproteobacteria</taxon>
        <taxon>Burkholderiales</taxon>
        <taxon>Burkholderiaceae</taxon>
        <taxon>Polynucleobacter</taxon>
    </lineage>
</organism>
<dbReference type="EMBL" id="CP000655">
    <property type="protein sequence ID" value="ABP34883.1"/>
    <property type="molecule type" value="Genomic_DNA"/>
</dbReference>
<dbReference type="RefSeq" id="WP_011903506.1">
    <property type="nucleotide sequence ID" value="NC_009379.1"/>
</dbReference>
<dbReference type="SMR" id="A4SZG9"/>
<dbReference type="GeneID" id="31482058"/>
<dbReference type="KEGG" id="pnu:Pnuc_1670"/>
<dbReference type="eggNOG" id="COG2060">
    <property type="taxonomic scope" value="Bacteria"/>
</dbReference>
<dbReference type="HOGENOM" id="CLU_018614_3_0_4"/>
<dbReference type="Proteomes" id="UP000000231">
    <property type="component" value="Chromosome"/>
</dbReference>
<dbReference type="GO" id="GO:0005886">
    <property type="term" value="C:plasma membrane"/>
    <property type="evidence" value="ECO:0007669"/>
    <property type="project" value="UniProtKB-SubCell"/>
</dbReference>
<dbReference type="GO" id="GO:0008556">
    <property type="term" value="F:P-type potassium transmembrane transporter activity"/>
    <property type="evidence" value="ECO:0007669"/>
    <property type="project" value="InterPro"/>
</dbReference>
<dbReference type="GO" id="GO:0030955">
    <property type="term" value="F:potassium ion binding"/>
    <property type="evidence" value="ECO:0007669"/>
    <property type="project" value="UniProtKB-UniRule"/>
</dbReference>
<dbReference type="HAMAP" id="MF_00275">
    <property type="entry name" value="KdpA"/>
    <property type="match status" value="1"/>
</dbReference>
<dbReference type="InterPro" id="IPR004623">
    <property type="entry name" value="KdpA"/>
</dbReference>
<dbReference type="NCBIfam" id="TIGR00680">
    <property type="entry name" value="kdpA"/>
    <property type="match status" value="1"/>
</dbReference>
<dbReference type="PANTHER" id="PTHR30607">
    <property type="entry name" value="POTASSIUM-TRANSPORTING ATPASE A CHAIN"/>
    <property type="match status" value="1"/>
</dbReference>
<dbReference type="PANTHER" id="PTHR30607:SF2">
    <property type="entry name" value="POTASSIUM-TRANSPORTING ATPASE POTASSIUM-BINDING SUBUNIT"/>
    <property type="match status" value="1"/>
</dbReference>
<dbReference type="Pfam" id="PF03814">
    <property type="entry name" value="KdpA"/>
    <property type="match status" value="1"/>
</dbReference>
<dbReference type="PIRSF" id="PIRSF001294">
    <property type="entry name" value="K_ATPaseA"/>
    <property type="match status" value="1"/>
</dbReference>
<sequence length="596" mass="63330">MSTHAILTIVLYVGVLLLLAYPLGGFIDAVMSGQSITSKKPFRFIENFIYKVCGIDPAIEMSWLSYAIGLIAFNILGVLFVFGLQLFQGILPLNPQGLVSVSPDSSFNTAISFATNTNWQAYVGEGTMSYLTQMLGLTTQNFLSAASGIVVVIALIRGFARNSIKTIGNLWVDLTRITLYVLVPISVVYAIFLVGQGSIQNFDAYKDVKTVEVAKFDAPKLDADGQPLKDEKGAVLTGPASTDQQTLPMGPVASQEAIKMLGTNGGGFFNANSAHPYENPTPLSNFIQILSIFLIPAALCFTFGRMVRDKRQGWVVLVTMILIFLTVTFAAVHFESQANPVLTNLGVDGAMGNMEGKETRFGIDDSSIFASITTLASCGAVNSMHDSFMPMGGFVPLWNMMLGEVVFGGVGTGLYGMLVFAILAVFIAGLMIGRTPEYLGKKIESYEMKMVAIAILVTPILALVGTAIAVMSVDGVAGIANPGAHGFSEILYAFTSAANNNGSAFAGLSANTPFYNSMLAIAMWFGRFGVIVPVLALAGAFAAKKKIAVNEGTMPTHGPLFIVLLAGTVILVGALNYVPALALGPIVEQLMLPVIH</sequence>
<accession>A4SZG9</accession>
<name>KDPA_POLAQ</name>
<proteinExistence type="inferred from homology"/>
<comment type="function">
    <text evidence="1">Part of the high-affinity ATP-driven potassium transport (or Kdp) system, which catalyzes the hydrolysis of ATP coupled with the electrogenic transport of potassium into the cytoplasm. This subunit binds the periplasmic potassium ions and delivers the ions to the membrane domain of KdpB through an intramembrane tunnel.</text>
</comment>
<comment type="subunit">
    <text evidence="1">The system is composed of three essential subunits: KdpA, KdpB and KdpC.</text>
</comment>
<comment type="subcellular location">
    <subcellularLocation>
        <location evidence="1">Cell inner membrane</location>
        <topology evidence="1">Multi-pass membrane protein</topology>
    </subcellularLocation>
</comment>
<comment type="similarity">
    <text evidence="1">Belongs to the KdpA family.</text>
</comment>
<reference key="1">
    <citation type="journal article" date="2012" name="Stand. Genomic Sci.">
        <title>Complete genome sequence of Polynucleobacter necessarius subsp. asymbioticus type strain (QLW-P1DMWA-1(T)).</title>
        <authorList>
            <person name="Meincke L."/>
            <person name="Copeland A."/>
            <person name="Lapidus A."/>
            <person name="Lucas S."/>
            <person name="Berry K.W."/>
            <person name="Del Rio T.G."/>
            <person name="Hammon N."/>
            <person name="Dalin E."/>
            <person name="Tice H."/>
            <person name="Pitluck S."/>
            <person name="Richardson P."/>
            <person name="Bruce D."/>
            <person name="Goodwin L."/>
            <person name="Han C."/>
            <person name="Tapia R."/>
            <person name="Detter J.C."/>
            <person name="Schmutz J."/>
            <person name="Brettin T."/>
            <person name="Larimer F."/>
            <person name="Land M."/>
            <person name="Hauser L."/>
            <person name="Kyrpides N.C."/>
            <person name="Ivanova N."/>
            <person name="Goker M."/>
            <person name="Woyke T."/>
            <person name="Wu Q.L."/>
            <person name="Pockl M."/>
            <person name="Hahn M.W."/>
            <person name="Klenk H.P."/>
        </authorList>
    </citation>
    <scope>NUCLEOTIDE SEQUENCE [LARGE SCALE GENOMIC DNA]</scope>
    <source>
        <strain>DSM 18221 / CIP 109841 / QLW-P1DMWA-1</strain>
    </source>
</reference>